<gene>
    <name evidence="1" type="primary">rpoB</name>
    <name type="ordered locus">LL1800</name>
    <name type="ORF">L0137</name>
</gene>
<dbReference type="EC" id="2.7.7.6" evidence="1"/>
<dbReference type="EMBL" id="AE005176">
    <property type="protein sequence ID" value="AAK05898.1"/>
    <property type="molecule type" value="Genomic_DNA"/>
</dbReference>
<dbReference type="PIR" id="H86849">
    <property type="entry name" value="H86849"/>
</dbReference>
<dbReference type="RefSeq" id="NP_267957.1">
    <property type="nucleotide sequence ID" value="NC_002662.1"/>
</dbReference>
<dbReference type="RefSeq" id="WP_003130544.1">
    <property type="nucleotide sequence ID" value="NC_002662.1"/>
</dbReference>
<dbReference type="SMR" id="Q9CEN6"/>
<dbReference type="PaxDb" id="272623-L0137"/>
<dbReference type="EnsemblBacteria" id="AAK05898">
    <property type="protein sequence ID" value="AAK05898"/>
    <property type="gene ID" value="L0137"/>
</dbReference>
<dbReference type="KEGG" id="lla:L0137"/>
<dbReference type="PATRIC" id="fig|272623.7.peg.1928"/>
<dbReference type="eggNOG" id="COG0085">
    <property type="taxonomic scope" value="Bacteria"/>
</dbReference>
<dbReference type="HOGENOM" id="CLU_000524_4_1_9"/>
<dbReference type="OrthoDB" id="9803954at2"/>
<dbReference type="Proteomes" id="UP000002196">
    <property type="component" value="Chromosome"/>
</dbReference>
<dbReference type="GO" id="GO:0000428">
    <property type="term" value="C:DNA-directed RNA polymerase complex"/>
    <property type="evidence" value="ECO:0007669"/>
    <property type="project" value="UniProtKB-KW"/>
</dbReference>
<dbReference type="GO" id="GO:0003677">
    <property type="term" value="F:DNA binding"/>
    <property type="evidence" value="ECO:0007669"/>
    <property type="project" value="UniProtKB-UniRule"/>
</dbReference>
<dbReference type="GO" id="GO:0003899">
    <property type="term" value="F:DNA-directed RNA polymerase activity"/>
    <property type="evidence" value="ECO:0007669"/>
    <property type="project" value="UniProtKB-UniRule"/>
</dbReference>
<dbReference type="GO" id="GO:0032549">
    <property type="term" value="F:ribonucleoside binding"/>
    <property type="evidence" value="ECO:0007669"/>
    <property type="project" value="InterPro"/>
</dbReference>
<dbReference type="GO" id="GO:0006351">
    <property type="term" value="P:DNA-templated transcription"/>
    <property type="evidence" value="ECO:0007669"/>
    <property type="project" value="UniProtKB-UniRule"/>
</dbReference>
<dbReference type="CDD" id="cd00653">
    <property type="entry name" value="RNA_pol_B_RPB2"/>
    <property type="match status" value="1"/>
</dbReference>
<dbReference type="Gene3D" id="2.40.50.100">
    <property type="match status" value="1"/>
</dbReference>
<dbReference type="Gene3D" id="2.40.50.150">
    <property type="match status" value="1"/>
</dbReference>
<dbReference type="Gene3D" id="3.90.1100.10">
    <property type="match status" value="2"/>
</dbReference>
<dbReference type="Gene3D" id="2.30.150.10">
    <property type="entry name" value="DNA-directed RNA polymerase, beta subunit, external 1 domain"/>
    <property type="match status" value="1"/>
</dbReference>
<dbReference type="Gene3D" id="2.40.270.10">
    <property type="entry name" value="DNA-directed RNA polymerase, subunit 2, domain 6"/>
    <property type="match status" value="2"/>
</dbReference>
<dbReference type="Gene3D" id="3.90.1800.10">
    <property type="entry name" value="RNA polymerase alpha subunit dimerisation domain"/>
    <property type="match status" value="1"/>
</dbReference>
<dbReference type="Gene3D" id="3.90.1110.10">
    <property type="entry name" value="RNA polymerase Rpb2, domain 2"/>
    <property type="match status" value="2"/>
</dbReference>
<dbReference type="HAMAP" id="MF_01321">
    <property type="entry name" value="RNApol_bact_RpoB"/>
    <property type="match status" value="1"/>
</dbReference>
<dbReference type="InterPro" id="IPR042107">
    <property type="entry name" value="DNA-dir_RNA_pol_bsu_ext_1_sf"/>
</dbReference>
<dbReference type="InterPro" id="IPR019462">
    <property type="entry name" value="DNA-dir_RNA_pol_bsu_external_1"/>
</dbReference>
<dbReference type="InterPro" id="IPR015712">
    <property type="entry name" value="DNA-dir_RNA_pol_su2"/>
</dbReference>
<dbReference type="InterPro" id="IPR007120">
    <property type="entry name" value="DNA-dir_RNAP_su2_dom"/>
</dbReference>
<dbReference type="InterPro" id="IPR037033">
    <property type="entry name" value="DNA-dir_RNAP_su2_hyb_sf"/>
</dbReference>
<dbReference type="InterPro" id="IPR010243">
    <property type="entry name" value="RNA_pol_bsu_bac"/>
</dbReference>
<dbReference type="InterPro" id="IPR007121">
    <property type="entry name" value="RNA_pol_bsu_CS"/>
</dbReference>
<dbReference type="InterPro" id="IPR007644">
    <property type="entry name" value="RNA_pol_bsu_protrusion"/>
</dbReference>
<dbReference type="InterPro" id="IPR007642">
    <property type="entry name" value="RNA_pol_Rpb2_2"/>
</dbReference>
<dbReference type="InterPro" id="IPR037034">
    <property type="entry name" value="RNA_pol_Rpb2_2_sf"/>
</dbReference>
<dbReference type="InterPro" id="IPR007645">
    <property type="entry name" value="RNA_pol_Rpb2_3"/>
</dbReference>
<dbReference type="InterPro" id="IPR007641">
    <property type="entry name" value="RNA_pol_Rpb2_7"/>
</dbReference>
<dbReference type="InterPro" id="IPR014724">
    <property type="entry name" value="RNA_pol_RPB2_OB-fold"/>
</dbReference>
<dbReference type="NCBIfam" id="NF001616">
    <property type="entry name" value="PRK00405.1"/>
    <property type="match status" value="1"/>
</dbReference>
<dbReference type="NCBIfam" id="TIGR02013">
    <property type="entry name" value="rpoB"/>
    <property type="match status" value="1"/>
</dbReference>
<dbReference type="PANTHER" id="PTHR20856">
    <property type="entry name" value="DNA-DIRECTED RNA POLYMERASE I SUBUNIT 2"/>
    <property type="match status" value="1"/>
</dbReference>
<dbReference type="Pfam" id="PF04563">
    <property type="entry name" value="RNA_pol_Rpb2_1"/>
    <property type="match status" value="1"/>
</dbReference>
<dbReference type="Pfam" id="PF04561">
    <property type="entry name" value="RNA_pol_Rpb2_2"/>
    <property type="match status" value="2"/>
</dbReference>
<dbReference type="Pfam" id="PF04565">
    <property type="entry name" value="RNA_pol_Rpb2_3"/>
    <property type="match status" value="1"/>
</dbReference>
<dbReference type="Pfam" id="PF10385">
    <property type="entry name" value="RNA_pol_Rpb2_45"/>
    <property type="match status" value="1"/>
</dbReference>
<dbReference type="Pfam" id="PF00562">
    <property type="entry name" value="RNA_pol_Rpb2_6"/>
    <property type="match status" value="1"/>
</dbReference>
<dbReference type="Pfam" id="PF04560">
    <property type="entry name" value="RNA_pol_Rpb2_7"/>
    <property type="match status" value="1"/>
</dbReference>
<dbReference type="SUPFAM" id="SSF64484">
    <property type="entry name" value="beta and beta-prime subunits of DNA dependent RNA-polymerase"/>
    <property type="match status" value="1"/>
</dbReference>
<dbReference type="PROSITE" id="PS01166">
    <property type="entry name" value="RNA_POL_BETA"/>
    <property type="match status" value="1"/>
</dbReference>
<sequence length="1196" mass="133154">MAGHDVKYGKHRTRRSFSRIKEVIGLPNLIEVQTLSYKNFLDEGLANVFKEMFPIDNFAGTMELEFVGYEMKTPKYTVEEARAHDANYSAPIYVTFRLVNKETGELKTQEVFFGDFPLMTEMGTFINNGSERLIVSQLVRSPGSYFHLKADKNGLESFGHTTIPNRGAWFELDTDAKGIGYVRIDRTRKLTFTTMLRALGFGSDEEILELLGETQLLTDTIAKDVHKNPADTRVEEALKDIYDRLRPGEPKTADSSRGLLVARFFDPKRYDFAPVGRYKFNKKLALKNRLLGLTLAEPIVDPETGEILVNTDTLVTRDVLDLIEPLLDNGLGNFVVEPSDDAVIPEPITLQSIKVYSPKDPERVVTLLSNGNPDAECRVLTPADVISNISYWLGLAEGIGKVDDIDHLGNRRIRSVGELLQNQVRIGLSRMERVIRERMSSSENENITPQGLINIRPVTASIKEFFGSSQLSQFMDQHNPLSELSHKRRFSALGPGGISRDRASYEVRDVHYTHYGRMCPIETPEGPNIGLINNLSSYAKVNEYGFIMSPYRRVDRVNGVVTDEVEYLTADEEDNYTVAQANSPLTEDSRFANETVMARHTGNNIEVEASTADYMDVSPKQVIAVAAACIPFLENDDSNRALMGANMQRQAVPLIDPHAPWIGTGMEHQTARDSGAALIAKHAGVVEYVDGNEIRVRRTSGELDIYNITKYRRSNSGTSYNQRPLARLGEKVEKGDIIADGPSMENGEMALGQNPLVAYMTWEGYNFEDAVIMSERLIKDDVYTSIAIEEYESETRDTKLGPEEITREIPNVGDEALKNLDESGIIRIGAEVKDGDLLVGKVTPKGETDPTPEERLLRAIFGEKAREVRDTSLRVPHGGGGIVHDVRVFTRENGDELPSGVNKLVRVFIAQKRKIHVGDKMAGRHGNKGVVSNIVPMEDMPYLPDGTPIDIMLNPLGVPSRMNIGQVMELHLGMAARTLGIHIATPVFDGASDEDIWDTVKEAGMADDAKTVLYDGRTGEPFDNRISVGVMYMIKLHHMVDDKLHARSVGPYSLVTQQPLGGKAQFGGQRFGEMEVWALEAYGAANVLQEILTYKSDDVIGRTRAYEAIVKGERIPKPGLPESFRVLVKELQSLGLDMKVLDADRNVLDLRELDEDEVMTRPDNTEITPEMLEAQEAIVAQAEAEEEALINADTEK</sequence>
<name>RPOB_LACLA</name>
<comment type="function">
    <text evidence="1">DNA-dependent RNA polymerase catalyzes the transcription of DNA into RNA using the four ribonucleoside triphosphates as substrates.</text>
</comment>
<comment type="catalytic activity">
    <reaction evidence="1">
        <text>RNA(n) + a ribonucleoside 5'-triphosphate = RNA(n+1) + diphosphate</text>
        <dbReference type="Rhea" id="RHEA:21248"/>
        <dbReference type="Rhea" id="RHEA-COMP:14527"/>
        <dbReference type="Rhea" id="RHEA-COMP:17342"/>
        <dbReference type="ChEBI" id="CHEBI:33019"/>
        <dbReference type="ChEBI" id="CHEBI:61557"/>
        <dbReference type="ChEBI" id="CHEBI:140395"/>
        <dbReference type="EC" id="2.7.7.6"/>
    </reaction>
</comment>
<comment type="subunit">
    <text evidence="1">The RNAP catalytic core consists of 2 alpha, 1 beta, 1 beta' and 1 omega subunit. When a sigma factor is associated with the core the holoenzyme is formed, which can initiate transcription.</text>
</comment>
<comment type="similarity">
    <text evidence="1">Belongs to the RNA polymerase beta chain family.</text>
</comment>
<reference key="1">
    <citation type="journal article" date="2001" name="Genome Res.">
        <title>The complete genome sequence of the lactic acid bacterium Lactococcus lactis ssp. lactis IL1403.</title>
        <authorList>
            <person name="Bolotin A."/>
            <person name="Wincker P."/>
            <person name="Mauger S."/>
            <person name="Jaillon O."/>
            <person name="Malarme K."/>
            <person name="Weissenbach J."/>
            <person name="Ehrlich S.D."/>
            <person name="Sorokin A."/>
        </authorList>
    </citation>
    <scope>NUCLEOTIDE SEQUENCE [LARGE SCALE GENOMIC DNA]</scope>
    <source>
        <strain>IL1403</strain>
    </source>
</reference>
<organism>
    <name type="scientific">Lactococcus lactis subsp. lactis (strain IL1403)</name>
    <name type="common">Streptococcus lactis</name>
    <dbReference type="NCBI Taxonomy" id="272623"/>
    <lineage>
        <taxon>Bacteria</taxon>
        <taxon>Bacillati</taxon>
        <taxon>Bacillota</taxon>
        <taxon>Bacilli</taxon>
        <taxon>Lactobacillales</taxon>
        <taxon>Streptococcaceae</taxon>
        <taxon>Lactococcus</taxon>
    </lineage>
</organism>
<feature type="chain" id="PRO_0000047907" description="DNA-directed RNA polymerase subunit beta">
    <location>
        <begin position="1"/>
        <end position="1196"/>
    </location>
</feature>
<evidence type="ECO:0000255" key="1">
    <source>
        <dbReference type="HAMAP-Rule" id="MF_01321"/>
    </source>
</evidence>
<protein>
    <recommendedName>
        <fullName evidence="1">DNA-directed RNA polymerase subunit beta</fullName>
        <shortName evidence="1">RNAP subunit beta</shortName>
        <ecNumber evidence="1">2.7.7.6</ecNumber>
    </recommendedName>
    <alternativeName>
        <fullName evidence="1">RNA polymerase subunit beta</fullName>
    </alternativeName>
    <alternativeName>
        <fullName evidence="1">Transcriptase subunit beta</fullName>
    </alternativeName>
</protein>
<proteinExistence type="inferred from homology"/>
<accession>Q9CEN6</accession>
<keyword id="KW-0240">DNA-directed RNA polymerase</keyword>
<keyword id="KW-0548">Nucleotidyltransferase</keyword>
<keyword id="KW-1185">Reference proteome</keyword>
<keyword id="KW-0804">Transcription</keyword>
<keyword id="KW-0808">Transferase</keyword>